<proteinExistence type="inferred from homology"/>
<organism>
    <name type="scientific">Frankia casuarinae (strain DSM 45818 / CECT 9043 / HFP020203 / CcI3)</name>
    <dbReference type="NCBI Taxonomy" id="106370"/>
    <lineage>
        <taxon>Bacteria</taxon>
        <taxon>Bacillati</taxon>
        <taxon>Actinomycetota</taxon>
        <taxon>Actinomycetes</taxon>
        <taxon>Frankiales</taxon>
        <taxon>Frankiaceae</taxon>
        <taxon>Frankia</taxon>
    </lineage>
</organism>
<gene>
    <name type="ordered locus">Francci3_1634</name>
</gene>
<evidence type="ECO:0000255" key="1">
    <source>
        <dbReference type="HAMAP-Rule" id="MF_00636"/>
    </source>
</evidence>
<accession>Q2JCI2</accession>
<comment type="function">
    <text evidence="1">Displays ATPase and GTPase activities.</text>
</comment>
<comment type="similarity">
    <text evidence="1">Belongs to the RapZ-like family.</text>
</comment>
<sequence>MTTPTLDLAIITGLSGAGRSTAAKCLEDLGWFVVDNLPPELLSTMAELGRRSGGAISRIAVVVDVRGRPFFSDLRAAIAALDARGMHPRMLFLEASDDALIRRFEHVRRPHPLQRDERVVDGIGRERILLAELRGEADLVLDTTDLNVHELRSKIDAAFGQPNANRLNATVVSFGYKYGLPLDADLVADCRFLPNPHWVEALRPFTGRDPQVRDYVLAQPGAQDFLDQYSALLRLVGEGYAREGKRYLTLAVGCTGGKHRSVAIAEQLGIRLAAGGVGVRVVHRDLGRE</sequence>
<keyword id="KW-0067">ATP-binding</keyword>
<keyword id="KW-0342">GTP-binding</keyword>
<keyword id="KW-0547">Nucleotide-binding</keyword>
<keyword id="KW-1185">Reference proteome</keyword>
<feature type="chain" id="PRO_0000258964" description="Nucleotide-binding protein Francci3_1634">
    <location>
        <begin position="1"/>
        <end position="289"/>
    </location>
</feature>
<feature type="binding site" evidence="1">
    <location>
        <begin position="13"/>
        <end position="20"/>
    </location>
    <ligand>
        <name>ATP</name>
        <dbReference type="ChEBI" id="CHEBI:30616"/>
    </ligand>
</feature>
<feature type="binding site" evidence="1">
    <location>
        <begin position="64"/>
        <end position="67"/>
    </location>
    <ligand>
        <name>GTP</name>
        <dbReference type="ChEBI" id="CHEBI:37565"/>
    </ligand>
</feature>
<dbReference type="EMBL" id="CP000249">
    <property type="protein sequence ID" value="ABD11010.1"/>
    <property type="molecule type" value="Genomic_DNA"/>
</dbReference>
<dbReference type="SMR" id="Q2JCI2"/>
<dbReference type="STRING" id="106370.Francci3_1634"/>
<dbReference type="KEGG" id="fra:Francci3_1634"/>
<dbReference type="eggNOG" id="COG1660">
    <property type="taxonomic scope" value="Bacteria"/>
</dbReference>
<dbReference type="HOGENOM" id="CLU_059558_0_0_11"/>
<dbReference type="OrthoDB" id="9784461at2"/>
<dbReference type="PhylomeDB" id="Q2JCI2"/>
<dbReference type="Proteomes" id="UP000001937">
    <property type="component" value="Chromosome"/>
</dbReference>
<dbReference type="GO" id="GO:0005524">
    <property type="term" value="F:ATP binding"/>
    <property type="evidence" value="ECO:0007669"/>
    <property type="project" value="UniProtKB-UniRule"/>
</dbReference>
<dbReference type="GO" id="GO:0005525">
    <property type="term" value="F:GTP binding"/>
    <property type="evidence" value="ECO:0007669"/>
    <property type="project" value="UniProtKB-UniRule"/>
</dbReference>
<dbReference type="Gene3D" id="3.40.50.300">
    <property type="entry name" value="P-loop containing nucleotide triphosphate hydrolases"/>
    <property type="match status" value="1"/>
</dbReference>
<dbReference type="HAMAP" id="MF_00636">
    <property type="entry name" value="RapZ_like"/>
    <property type="match status" value="1"/>
</dbReference>
<dbReference type="InterPro" id="IPR027417">
    <property type="entry name" value="P-loop_NTPase"/>
</dbReference>
<dbReference type="InterPro" id="IPR005337">
    <property type="entry name" value="RapZ-like"/>
</dbReference>
<dbReference type="InterPro" id="IPR053930">
    <property type="entry name" value="RapZ-like_N"/>
</dbReference>
<dbReference type="InterPro" id="IPR053931">
    <property type="entry name" value="RapZ_C"/>
</dbReference>
<dbReference type="NCBIfam" id="NF003828">
    <property type="entry name" value="PRK05416.1"/>
    <property type="match status" value="1"/>
</dbReference>
<dbReference type="PANTHER" id="PTHR30448">
    <property type="entry name" value="RNASE ADAPTER PROTEIN RAPZ"/>
    <property type="match status" value="1"/>
</dbReference>
<dbReference type="PANTHER" id="PTHR30448:SF0">
    <property type="entry name" value="RNASE ADAPTER PROTEIN RAPZ"/>
    <property type="match status" value="1"/>
</dbReference>
<dbReference type="Pfam" id="PF22740">
    <property type="entry name" value="PapZ_C"/>
    <property type="match status" value="1"/>
</dbReference>
<dbReference type="Pfam" id="PF03668">
    <property type="entry name" value="RapZ-like_N"/>
    <property type="match status" value="1"/>
</dbReference>
<dbReference type="PIRSF" id="PIRSF005052">
    <property type="entry name" value="P-loopkin"/>
    <property type="match status" value="1"/>
</dbReference>
<dbReference type="SUPFAM" id="SSF52540">
    <property type="entry name" value="P-loop containing nucleoside triphosphate hydrolases"/>
    <property type="match status" value="1"/>
</dbReference>
<protein>
    <recommendedName>
        <fullName evidence="1">Nucleotide-binding protein Francci3_1634</fullName>
    </recommendedName>
</protein>
<name>Y1634_FRACC</name>
<reference key="1">
    <citation type="journal article" date="2007" name="Genome Res.">
        <title>Genome characteristics of facultatively symbiotic Frankia sp. strains reflect host range and host plant biogeography.</title>
        <authorList>
            <person name="Normand P."/>
            <person name="Lapierre P."/>
            <person name="Tisa L.S."/>
            <person name="Gogarten J.P."/>
            <person name="Alloisio N."/>
            <person name="Bagnarol E."/>
            <person name="Bassi C.A."/>
            <person name="Berry A.M."/>
            <person name="Bickhart D.M."/>
            <person name="Choisne N."/>
            <person name="Couloux A."/>
            <person name="Cournoyer B."/>
            <person name="Cruveiller S."/>
            <person name="Daubin V."/>
            <person name="Demange N."/>
            <person name="Francino M.P."/>
            <person name="Goltsman E."/>
            <person name="Huang Y."/>
            <person name="Kopp O.R."/>
            <person name="Labarre L."/>
            <person name="Lapidus A."/>
            <person name="Lavire C."/>
            <person name="Marechal J."/>
            <person name="Martinez M."/>
            <person name="Mastronunzio J.E."/>
            <person name="Mullin B.C."/>
            <person name="Niemann J."/>
            <person name="Pujic P."/>
            <person name="Rawnsley T."/>
            <person name="Rouy Z."/>
            <person name="Schenowitz C."/>
            <person name="Sellstedt A."/>
            <person name="Tavares F."/>
            <person name="Tomkins J.P."/>
            <person name="Vallenet D."/>
            <person name="Valverde C."/>
            <person name="Wall L.G."/>
            <person name="Wang Y."/>
            <person name="Medigue C."/>
            <person name="Benson D.R."/>
        </authorList>
    </citation>
    <scope>NUCLEOTIDE SEQUENCE [LARGE SCALE GENOMIC DNA]</scope>
    <source>
        <strain>DSM 45818 / CECT 9043 / HFP020203 / CcI3</strain>
    </source>
</reference>